<keyword id="KW-0233">DNA recombination</keyword>
<keyword id="KW-0238">DNA-binding</keyword>
<keyword id="KW-1185">Reference proteome</keyword>
<keyword id="KW-0677">Repeat</keyword>
<keyword id="KW-0814">Transposable element</keyword>
<keyword id="KW-0815">Transposition</keyword>
<comment type="miscellaneous">
    <text>This protein is coded by the transposable maize controlling element 'Activator' (Ac), which is able to activate chromosome breakage at a specific location; it may be the structural gene for a trans-acting function required for transposition.</text>
</comment>
<evidence type="ECO:0000256" key="1">
    <source>
        <dbReference type="SAM" id="MobiDB-lite"/>
    </source>
</evidence>
<protein>
    <recommendedName>
        <fullName>Putative AC transposase</fullName>
    </recommendedName>
    <alternativeName>
        <fullName>ORFA</fullName>
    </alternativeName>
</protein>
<proteinExistence type="evidence at transcript level"/>
<accession>P08770</accession>
<name>TRA1_MAIZE</name>
<reference key="1">
    <citation type="journal article" date="1987" name="EMBO J.">
        <title>Transcription of transposable element Activator (Ac) of Zea mays L.</title>
        <authorList>
            <person name="Kunze R."/>
            <person name="Stochaj U."/>
            <person name="Laufs J."/>
            <person name="Starlinger P."/>
        </authorList>
    </citation>
    <scope>NUCLEOTIDE SEQUENCE [MRNA]</scope>
</reference>
<dbReference type="EMBL" id="X05424">
    <property type="protein sequence ID" value="CAA29005.1"/>
    <property type="molecule type" value="mRNA"/>
</dbReference>
<dbReference type="PIR" id="B27863">
    <property type="entry name" value="B27863"/>
</dbReference>
<dbReference type="PIR" id="T02916">
    <property type="entry name" value="T02916"/>
</dbReference>
<dbReference type="FunCoup" id="P08770">
    <property type="interactions" value="797"/>
</dbReference>
<dbReference type="STRING" id="4577.P08770"/>
<dbReference type="PaxDb" id="4577-GRMZM2G061591_P01"/>
<dbReference type="MaizeGDB" id="65747"/>
<dbReference type="InParanoid" id="P08770"/>
<dbReference type="BRENDA" id="2.7.7.B22">
    <property type="organism ID" value="6752"/>
</dbReference>
<dbReference type="Proteomes" id="UP000007305">
    <property type="component" value="Unplaced"/>
</dbReference>
<dbReference type="GO" id="GO:0003677">
    <property type="term" value="F:DNA binding"/>
    <property type="evidence" value="ECO:0007669"/>
    <property type="project" value="UniProtKB-KW"/>
</dbReference>
<dbReference type="GO" id="GO:0046983">
    <property type="term" value="F:protein dimerization activity"/>
    <property type="evidence" value="ECO:0007669"/>
    <property type="project" value="InterPro"/>
</dbReference>
<dbReference type="GO" id="GO:0006310">
    <property type="term" value="P:DNA recombination"/>
    <property type="evidence" value="ECO:0007669"/>
    <property type="project" value="UniProtKB-KW"/>
</dbReference>
<dbReference type="GO" id="GO:0032196">
    <property type="term" value="P:transposition"/>
    <property type="evidence" value="ECO:0007669"/>
    <property type="project" value="UniProtKB-KW"/>
</dbReference>
<dbReference type="InterPro" id="IPR025525">
    <property type="entry name" value="hAT-like_transposase_RNase-H"/>
</dbReference>
<dbReference type="InterPro" id="IPR008906">
    <property type="entry name" value="HATC_C_dom"/>
</dbReference>
<dbReference type="InterPro" id="IPR012337">
    <property type="entry name" value="RNaseH-like_sf"/>
</dbReference>
<dbReference type="InterPro" id="IPR052035">
    <property type="entry name" value="ZnF_BED_domain_contain"/>
</dbReference>
<dbReference type="PANTHER" id="PTHR46481">
    <property type="entry name" value="ZINC FINGER BED DOMAIN-CONTAINING PROTEIN 4"/>
    <property type="match status" value="1"/>
</dbReference>
<dbReference type="PANTHER" id="PTHR46481:SF11">
    <property type="entry name" value="ZINC FINGER BED DOMAIN-CONTAINING PROTEIN RICESLEEPER 2-LIKE"/>
    <property type="match status" value="1"/>
</dbReference>
<dbReference type="Pfam" id="PF05699">
    <property type="entry name" value="Dimer_Tnp_hAT"/>
    <property type="match status" value="1"/>
</dbReference>
<dbReference type="Pfam" id="PF14372">
    <property type="entry name" value="hAT-like_RNase-H"/>
    <property type="match status" value="1"/>
</dbReference>
<dbReference type="SMART" id="SM00614">
    <property type="entry name" value="ZnF_BED"/>
    <property type="match status" value="1"/>
</dbReference>
<dbReference type="SUPFAM" id="SSF53098">
    <property type="entry name" value="Ribonuclease H-like"/>
    <property type="match status" value="1"/>
</dbReference>
<sequence>MTPPVGNNPPSGSAIRLAKLMSTTRAPSTRKTNSVFSAYAQGLKRKAEASSSRIQNVRARARGHGCGRTSPSSSTAEAERHFIQSVSSSNANGTATDPSQDDMAIVHEPQPQPQPQPEPQPQPQPEPEEEAPQKRAKKCTSDVWQHFTKKEIEVEVDGKKYVQVWGHCNFPNCKAKYRAEGHHGTSGFRNHLRTSHSLVKGQLCLKSEKDHGKDINLIEPYKYDEVVSLKKLHLAIIMHEYPFNIVEHEYFVEFVKSLRPHFPIKSRVTARKYIMDLYLEEKEKLYGKLKDVQSRFSTTMDMWTSCQNKSYMCVTIHWIDDDWCLQKRIVGFFHVEGRHTGQRLSQTFTAIMVKWNIEKKLFALSLDNASANEVAVHDIIEDLQDTDSNLVCDGAFFHVRCACHILNLVAKDGLAVIAGTIEKIKAIVLAVKSSPLQWEELMKCASECDLDKSKGISYDVSTRWNSTYLMLRDALYYKPALIRLKTSDPRRYDAICPKAEEWKMALTLFKCLKKFFDLTELLSGTQYSTANLFYKGFCEIKDLIDQWCVHEKFVIRRMAVAMSEKFEKYWKVSNIALAVACFLDPRYKKILIEFYMKKFHGDSYKVHVDDFVRVIRKLYQFYSSCSPSAPKTKTTTNDSMDDTLMENEDDEFQNYLHELKDYDQVESNELDKYMSEPLLKHSGQFDILSWWRGRVAEYPILTQIARDVLAIQVSTVASESAFSAGGRVVDPYRNRLGSEIVEALICTKDWVAASRKGATYFPTMIGDLEVLDSVIAAATNHENHMDEDEDAIEFSKNNEDVASGSSP</sequence>
<organism>
    <name type="scientific">Zea mays</name>
    <name type="common">Maize</name>
    <dbReference type="NCBI Taxonomy" id="4577"/>
    <lineage>
        <taxon>Eukaryota</taxon>
        <taxon>Viridiplantae</taxon>
        <taxon>Streptophyta</taxon>
        <taxon>Embryophyta</taxon>
        <taxon>Tracheophyta</taxon>
        <taxon>Spermatophyta</taxon>
        <taxon>Magnoliopsida</taxon>
        <taxon>Liliopsida</taxon>
        <taxon>Poales</taxon>
        <taxon>Poaceae</taxon>
        <taxon>PACMAD clade</taxon>
        <taxon>Panicoideae</taxon>
        <taxon>Andropogonodae</taxon>
        <taxon>Andropogoneae</taxon>
        <taxon>Tripsacinae</taxon>
        <taxon>Zea</taxon>
    </lineage>
</organism>
<feature type="initiator methionine" description="Removed">
    <location>
        <position position="1"/>
    </location>
</feature>
<feature type="chain" id="PRO_0000065592" description="Putative AC transposase">
    <location>
        <begin position="2"/>
        <end position="807"/>
    </location>
</feature>
<feature type="repeat" description="1">
    <location>
        <begin position="109"/>
        <end position="110"/>
    </location>
</feature>
<feature type="repeat" description="2">
    <location>
        <begin position="111"/>
        <end position="112"/>
    </location>
</feature>
<feature type="repeat" description="3">
    <location>
        <begin position="113"/>
        <end position="114"/>
    </location>
</feature>
<feature type="repeat" description="4">
    <location>
        <begin position="115"/>
        <end position="116"/>
    </location>
</feature>
<feature type="repeat" description="5">
    <location>
        <begin position="117"/>
        <end position="118"/>
    </location>
</feature>
<feature type="repeat" description="6">
    <location>
        <begin position="119"/>
        <end position="120"/>
    </location>
</feature>
<feature type="repeat" description="7">
    <location>
        <begin position="121"/>
        <end position="122"/>
    </location>
</feature>
<feature type="repeat" description="8">
    <location>
        <begin position="123"/>
        <end position="124"/>
    </location>
</feature>
<feature type="repeat" description="9">
    <location>
        <begin position="125"/>
        <end position="126"/>
    </location>
</feature>
<feature type="repeat" description="10">
    <location>
        <begin position="127"/>
        <end position="128"/>
    </location>
</feature>
<feature type="region of interest" description="Disordered" evidence="1">
    <location>
        <begin position="42"/>
        <end position="140"/>
    </location>
</feature>
<feature type="region of interest" description="10 X 2 AA tandem repeats of P-[QE]">
    <location>
        <begin position="109"/>
        <end position="128"/>
    </location>
</feature>
<feature type="region of interest" description="Disordered" evidence="1">
    <location>
        <begin position="785"/>
        <end position="807"/>
    </location>
</feature>
<feature type="compositionally biased region" description="Polar residues" evidence="1">
    <location>
        <begin position="84"/>
        <end position="98"/>
    </location>
</feature>
<feature type="compositionally biased region" description="Pro residues" evidence="1">
    <location>
        <begin position="110"/>
        <end position="125"/>
    </location>
</feature>